<keyword id="KW-0028">Amino-acid biosynthesis</keyword>
<keyword id="KW-0368">Histidine biosynthesis</keyword>
<keyword id="KW-0479">Metal-binding</keyword>
<keyword id="KW-0520">NAD</keyword>
<keyword id="KW-0560">Oxidoreductase</keyword>
<keyword id="KW-1185">Reference proteome</keyword>
<keyword id="KW-0862">Zinc</keyword>
<name>HISX_GLOVI</name>
<proteinExistence type="inferred from homology"/>
<comment type="function">
    <text evidence="1">Catalyzes the sequential NAD-dependent oxidations of L-histidinol to L-histidinaldehyde and then to L-histidine.</text>
</comment>
<comment type="catalytic activity">
    <reaction evidence="1">
        <text>L-histidinol + 2 NAD(+) + H2O = L-histidine + 2 NADH + 3 H(+)</text>
        <dbReference type="Rhea" id="RHEA:20641"/>
        <dbReference type="ChEBI" id="CHEBI:15377"/>
        <dbReference type="ChEBI" id="CHEBI:15378"/>
        <dbReference type="ChEBI" id="CHEBI:57540"/>
        <dbReference type="ChEBI" id="CHEBI:57595"/>
        <dbReference type="ChEBI" id="CHEBI:57699"/>
        <dbReference type="ChEBI" id="CHEBI:57945"/>
        <dbReference type="EC" id="1.1.1.23"/>
    </reaction>
</comment>
<comment type="cofactor">
    <cofactor evidence="1">
        <name>Zn(2+)</name>
        <dbReference type="ChEBI" id="CHEBI:29105"/>
    </cofactor>
    <text evidence="1">Binds 1 zinc ion per subunit.</text>
</comment>
<comment type="pathway">
    <text evidence="1">Amino-acid biosynthesis; L-histidine biosynthesis; L-histidine from 5-phospho-alpha-D-ribose 1-diphosphate: step 9/9.</text>
</comment>
<comment type="similarity">
    <text evidence="1">Belongs to the histidinol dehydrogenase family.</text>
</comment>
<reference key="1">
    <citation type="journal article" date="2003" name="DNA Res.">
        <title>Complete genome structure of Gloeobacter violaceus PCC 7421, a cyanobacterium that lacks thylakoids.</title>
        <authorList>
            <person name="Nakamura Y."/>
            <person name="Kaneko T."/>
            <person name="Sato S."/>
            <person name="Mimuro M."/>
            <person name="Miyashita H."/>
            <person name="Tsuchiya T."/>
            <person name="Sasamoto S."/>
            <person name="Watanabe A."/>
            <person name="Kawashima K."/>
            <person name="Kishida Y."/>
            <person name="Kiyokawa C."/>
            <person name="Kohara M."/>
            <person name="Matsumoto M."/>
            <person name="Matsuno A."/>
            <person name="Nakazaki N."/>
            <person name="Shimpo S."/>
            <person name="Takeuchi C."/>
            <person name="Yamada M."/>
            <person name="Tabata S."/>
        </authorList>
    </citation>
    <scope>NUCLEOTIDE SEQUENCE [LARGE SCALE GENOMIC DNA]</scope>
    <source>
        <strain>ATCC 29082 / PCC 7421</strain>
    </source>
</reference>
<accession>Q7NL02</accession>
<gene>
    <name evidence="1" type="primary">hisD</name>
    <name type="ordered locus">gll1324</name>
</gene>
<dbReference type="EC" id="1.1.1.23" evidence="1"/>
<dbReference type="EMBL" id="BA000045">
    <property type="protein sequence ID" value="BAC89265.1"/>
    <property type="molecule type" value="Genomic_DNA"/>
</dbReference>
<dbReference type="RefSeq" id="NP_924270.1">
    <property type="nucleotide sequence ID" value="NC_005125.1"/>
</dbReference>
<dbReference type="RefSeq" id="WP_011141324.1">
    <property type="nucleotide sequence ID" value="NC_005125.1"/>
</dbReference>
<dbReference type="SMR" id="Q7NL02"/>
<dbReference type="FunCoup" id="Q7NL02">
    <property type="interactions" value="353"/>
</dbReference>
<dbReference type="STRING" id="251221.gene:10758807"/>
<dbReference type="EnsemblBacteria" id="BAC89265">
    <property type="protein sequence ID" value="BAC89265"/>
    <property type="gene ID" value="BAC89265"/>
</dbReference>
<dbReference type="KEGG" id="gvi:gll1324"/>
<dbReference type="PATRIC" id="fig|251221.4.peg.1351"/>
<dbReference type="eggNOG" id="COG0141">
    <property type="taxonomic scope" value="Bacteria"/>
</dbReference>
<dbReference type="HOGENOM" id="CLU_006732_3_3_3"/>
<dbReference type="InParanoid" id="Q7NL02"/>
<dbReference type="OrthoDB" id="9805269at2"/>
<dbReference type="PhylomeDB" id="Q7NL02"/>
<dbReference type="UniPathway" id="UPA00031">
    <property type="reaction ID" value="UER00014"/>
</dbReference>
<dbReference type="Proteomes" id="UP000000557">
    <property type="component" value="Chromosome"/>
</dbReference>
<dbReference type="GO" id="GO:0005737">
    <property type="term" value="C:cytoplasm"/>
    <property type="evidence" value="ECO:0000318"/>
    <property type="project" value="GO_Central"/>
</dbReference>
<dbReference type="GO" id="GO:0005829">
    <property type="term" value="C:cytosol"/>
    <property type="evidence" value="ECO:0000318"/>
    <property type="project" value="GO_Central"/>
</dbReference>
<dbReference type="GO" id="GO:0004399">
    <property type="term" value="F:histidinol dehydrogenase activity"/>
    <property type="evidence" value="ECO:0000318"/>
    <property type="project" value="GO_Central"/>
</dbReference>
<dbReference type="GO" id="GO:0051287">
    <property type="term" value="F:NAD binding"/>
    <property type="evidence" value="ECO:0007669"/>
    <property type="project" value="InterPro"/>
</dbReference>
<dbReference type="GO" id="GO:0008270">
    <property type="term" value="F:zinc ion binding"/>
    <property type="evidence" value="ECO:0007669"/>
    <property type="project" value="UniProtKB-UniRule"/>
</dbReference>
<dbReference type="GO" id="GO:0000105">
    <property type="term" value="P:L-histidine biosynthetic process"/>
    <property type="evidence" value="ECO:0000318"/>
    <property type="project" value="GO_Central"/>
</dbReference>
<dbReference type="CDD" id="cd06572">
    <property type="entry name" value="Histidinol_dh"/>
    <property type="match status" value="1"/>
</dbReference>
<dbReference type="FunFam" id="3.40.50.1980:FF:000001">
    <property type="entry name" value="Histidinol dehydrogenase"/>
    <property type="match status" value="1"/>
</dbReference>
<dbReference type="FunFam" id="3.40.50.1980:FF:000026">
    <property type="entry name" value="Histidinol dehydrogenase"/>
    <property type="match status" value="1"/>
</dbReference>
<dbReference type="Gene3D" id="1.20.5.1300">
    <property type="match status" value="1"/>
</dbReference>
<dbReference type="Gene3D" id="3.40.50.1980">
    <property type="entry name" value="Nitrogenase molybdenum iron protein domain"/>
    <property type="match status" value="2"/>
</dbReference>
<dbReference type="HAMAP" id="MF_01024">
    <property type="entry name" value="HisD"/>
    <property type="match status" value="1"/>
</dbReference>
<dbReference type="InterPro" id="IPR016161">
    <property type="entry name" value="Ald_DH/histidinol_DH"/>
</dbReference>
<dbReference type="InterPro" id="IPR001692">
    <property type="entry name" value="Histidinol_DH_CS"/>
</dbReference>
<dbReference type="InterPro" id="IPR022695">
    <property type="entry name" value="Histidinol_DH_monofunct"/>
</dbReference>
<dbReference type="InterPro" id="IPR012131">
    <property type="entry name" value="Hstdl_DH"/>
</dbReference>
<dbReference type="NCBIfam" id="TIGR00069">
    <property type="entry name" value="hisD"/>
    <property type="match status" value="1"/>
</dbReference>
<dbReference type="PANTHER" id="PTHR21256:SF2">
    <property type="entry name" value="HISTIDINE BIOSYNTHESIS TRIFUNCTIONAL PROTEIN"/>
    <property type="match status" value="1"/>
</dbReference>
<dbReference type="PANTHER" id="PTHR21256">
    <property type="entry name" value="HISTIDINOL DEHYDROGENASE HDH"/>
    <property type="match status" value="1"/>
</dbReference>
<dbReference type="Pfam" id="PF00815">
    <property type="entry name" value="Histidinol_dh"/>
    <property type="match status" value="1"/>
</dbReference>
<dbReference type="PIRSF" id="PIRSF000099">
    <property type="entry name" value="Histidinol_dh"/>
    <property type="match status" value="1"/>
</dbReference>
<dbReference type="PRINTS" id="PR00083">
    <property type="entry name" value="HOLDHDRGNASE"/>
</dbReference>
<dbReference type="SUPFAM" id="SSF53720">
    <property type="entry name" value="ALDH-like"/>
    <property type="match status" value="1"/>
</dbReference>
<dbReference type="PROSITE" id="PS00611">
    <property type="entry name" value="HISOL_DEHYDROGENASE"/>
    <property type="match status" value="1"/>
</dbReference>
<protein>
    <recommendedName>
        <fullName evidence="1">Histidinol dehydrogenase</fullName>
        <shortName evidence="1">HDH</shortName>
        <ecNumber evidence="1">1.1.1.23</ecNumber>
    </recommendedName>
</protein>
<sequence length="445" mass="48032">MLRLITQLSEAQTEIKRIAARTHSEQVQHQEATVREILQNVRRQGDEALLRYTLEFDQVRLAPGDLVVGAAELDAAYQRVSTSLLKAIRLAKQRIEQFHRERICKSWVQFQDRGIVLGRRYTPVDAAGLYIPGGRASYPSSVLMSAIPAVVAGVPRIVLVTPPNPEGKINPAVLVAAQESGVHEIYRIGGAQAIGALTYGTRTIAPVSVIAGPGNIYVTLAKKLVYGEVGIDSLAGPSEVLIIADSTANPVFLAADMLAQAEHDSLASAILITPDGRLAERTIEAVDRQLENHPRRTLTEKSLANYGLVIVTADLAEAAALSNLFAPEHLELEVEDPWELLEKVRHAGAIFLGHATPEAVGDYLAGPSHILPTSGTARYASGVGVETFQKCSSLVQYTPQALAEVGEAIDALTAAEGLPSHGDSVRLRLQQYENPHSPTQQQQEE</sequence>
<feature type="chain" id="PRO_0000135775" description="Histidinol dehydrogenase">
    <location>
        <begin position="1"/>
        <end position="445"/>
    </location>
</feature>
<feature type="active site" description="Proton acceptor" evidence="1">
    <location>
        <position position="328"/>
    </location>
</feature>
<feature type="active site" description="Proton acceptor" evidence="1">
    <location>
        <position position="329"/>
    </location>
</feature>
<feature type="binding site" evidence="1">
    <location>
        <position position="130"/>
    </location>
    <ligand>
        <name>NAD(+)</name>
        <dbReference type="ChEBI" id="CHEBI:57540"/>
    </ligand>
</feature>
<feature type="binding site" evidence="1">
    <location>
        <position position="192"/>
    </location>
    <ligand>
        <name>NAD(+)</name>
        <dbReference type="ChEBI" id="CHEBI:57540"/>
    </ligand>
</feature>
<feature type="binding site" evidence="1">
    <location>
        <position position="215"/>
    </location>
    <ligand>
        <name>NAD(+)</name>
        <dbReference type="ChEBI" id="CHEBI:57540"/>
    </ligand>
</feature>
<feature type="binding site" evidence="1">
    <location>
        <position position="238"/>
    </location>
    <ligand>
        <name>substrate</name>
    </ligand>
</feature>
<feature type="binding site" evidence="1">
    <location>
        <position position="260"/>
    </location>
    <ligand>
        <name>substrate</name>
    </ligand>
</feature>
<feature type="binding site" evidence="1">
    <location>
        <position position="260"/>
    </location>
    <ligand>
        <name>Zn(2+)</name>
        <dbReference type="ChEBI" id="CHEBI:29105"/>
    </ligand>
</feature>
<feature type="binding site" evidence="1">
    <location>
        <position position="263"/>
    </location>
    <ligand>
        <name>substrate</name>
    </ligand>
</feature>
<feature type="binding site" evidence="1">
    <location>
        <position position="263"/>
    </location>
    <ligand>
        <name>Zn(2+)</name>
        <dbReference type="ChEBI" id="CHEBI:29105"/>
    </ligand>
</feature>
<feature type="binding site" evidence="1">
    <location>
        <position position="329"/>
    </location>
    <ligand>
        <name>substrate</name>
    </ligand>
</feature>
<feature type="binding site" evidence="1">
    <location>
        <position position="362"/>
    </location>
    <ligand>
        <name>substrate</name>
    </ligand>
</feature>
<feature type="binding site" evidence="1">
    <location>
        <position position="362"/>
    </location>
    <ligand>
        <name>Zn(2+)</name>
        <dbReference type="ChEBI" id="CHEBI:29105"/>
    </ligand>
</feature>
<feature type="binding site" evidence="1">
    <location>
        <position position="416"/>
    </location>
    <ligand>
        <name>substrate</name>
    </ligand>
</feature>
<feature type="binding site" evidence="1">
    <location>
        <position position="421"/>
    </location>
    <ligand>
        <name>substrate</name>
    </ligand>
</feature>
<feature type="binding site" evidence="1">
    <location>
        <position position="421"/>
    </location>
    <ligand>
        <name>Zn(2+)</name>
        <dbReference type="ChEBI" id="CHEBI:29105"/>
    </ligand>
</feature>
<evidence type="ECO:0000255" key="1">
    <source>
        <dbReference type="HAMAP-Rule" id="MF_01024"/>
    </source>
</evidence>
<organism>
    <name type="scientific">Gloeobacter violaceus (strain ATCC 29082 / PCC 7421)</name>
    <dbReference type="NCBI Taxonomy" id="251221"/>
    <lineage>
        <taxon>Bacteria</taxon>
        <taxon>Bacillati</taxon>
        <taxon>Cyanobacteriota</taxon>
        <taxon>Cyanophyceae</taxon>
        <taxon>Gloeobacterales</taxon>
        <taxon>Gloeobacteraceae</taxon>
        <taxon>Gloeobacter</taxon>
    </lineage>
</organism>